<accession>B5F8R7</accession>
<evidence type="ECO:0000255" key="1">
    <source>
        <dbReference type="HAMAP-Rule" id="MF_01380"/>
    </source>
</evidence>
<feature type="chain" id="PRO_1000144927" description="Iron-sulfur cluster insertion protein ErpA">
    <location>
        <begin position="1"/>
        <end position="114"/>
    </location>
</feature>
<feature type="binding site" evidence="1">
    <location>
        <position position="42"/>
    </location>
    <ligand>
        <name>iron-sulfur cluster</name>
        <dbReference type="ChEBI" id="CHEBI:30408"/>
    </ligand>
</feature>
<feature type="binding site" evidence="1">
    <location>
        <position position="106"/>
    </location>
    <ligand>
        <name>iron-sulfur cluster</name>
        <dbReference type="ChEBI" id="CHEBI:30408"/>
    </ligand>
</feature>
<feature type="binding site" evidence="1">
    <location>
        <position position="108"/>
    </location>
    <ligand>
        <name>iron-sulfur cluster</name>
        <dbReference type="ChEBI" id="CHEBI:30408"/>
    </ligand>
</feature>
<reference key="1">
    <citation type="journal article" date="2011" name="J. Bacteriol.">
        <title>Comparative genomics of 28 Salmonella enterica isolates: evidence for CRISPR-mediated adaptive sublineage evolution.</title>
        <authorList>
            <person name="Fricke W.F."/>
            <person name="Mammel M.K."/>
            <person name="McDermott P.F."/>
            <person name="Tartera C."/>
            <person name="White D.G."/>
            <person name="Leclerc J.E."/>
            <person name="Ravel J."/>
            <person name="Cebula T.A."/>
        </authorList>
    </citation>
    <scope>NUCLEOTIDE SEQUENCE [LARGE SCALE GENOMIC DNA]</scope>
    <source>
        <strain>SL483</strain>
    </source>
</reference>
<protein>
    <recommendedName>
        <fullName evidence="1">Iron-sulfur cluster insertion protein ErpA</fullName>
    </recommendedName>
</protein>
<gene>
    <name evidence="1" type="primary">erpA</name>
    <name type="ordered locus">SeAg_B0242</name>
</gene>
<dbReference type="EMBL" id="CP001138">
    <property type="protein sequence ID" value="ACH49119.1"/>
    <property type="molecule type" value="Genomic_DNA"/>
</dbReference>
<dbReference type="RefSeq" id="WP_001278668.1">
    <property type="nucleotide sequence ID" value="NC_011149.1"/>
</dbReference>
<dbReference type="SMR" id="B5F8R7"/>
<dbReference type="GeneID" id="66754727"/>
<dbReference type="KEGG" id="sea:SeAg_B0242"/>
<dbReference type="HOGENOM" id="CLU_069054_5_3_6"/>
<dbReference type="Proteomes" id="UP000008819">
    <property type="component" value="Chromosome"/>
</dbReference>
<dbReference type="GO" id="GO:0005829">
    <property type="term" value="C:cytosol"/>
    <property type="evidence" value="ECO:0007669"/>
    <property type="project" value="TreeGrafter"/>
</dbReference>
<dbReference type="GO" id="GO:0051537">
    <property type="term" value="F:2 iron, 2 sulfur cluster binding"/>
    <property type="evidence" value="ECO:0007669"/>
    <property type="project" value="UniProtKB-ARBA"/>
</dbReference>
<dbReference type="GO" id="GO:0051539">
    <property type="term" value="F:4 iron, 4 sulfur cluster binding"/>
    <property type="evidence" value="ECO:0007669"/>
    <property type="project" value="TreeGrafter"/>
</dbReference>
<dbReference type="GO" id="GO:0005506">
    <property type="term" value="F:iron ion binding"/>
    <property type="evidence" value="ECO:0007669"/>
    <property type="project" value="UniProtKB-UniRule"/>
</dbReference>
<dbReference type="GO" id="GO:0016226">
    <property type="term" value="P:iron-sulfur cluster assembly"/>
    <property type="evidence" value="ECO:0007669"/>
    <property type="project" value="UniProtKB-UniRule"/>
</dbReference>
<dbReference type="FunFam" id="2.60.300.12:FF:000002">
    <property type="entry name" value="Iron-sulfur cluster insertion protein ErpA"/>
    <property type="match status" value="1"/>
</dbReference>
<dbReference type="Gene3D" id="2.60.300.12">
    <property type="entry name" value="HesB-like domain"/>
    <property type="match status" value="1"/>
</dbReference>
<dbReference type="HAMAP" id="MF_01380">
    <property type="entry name" value="Fe_S_insert_ErpA"/>
    <property type="match status" value="1"/>
</dbReference>
<dbReference type="InterPro" id="IPR000361">
    <property type="entry name" value="FeS_biogenesis"/>
</dbReference>
<dbReference type="InterPro" id="IPR016092">
    <property type="entry name" value="FeS_cluster_insertion"/>
</dbReference>
<dbReference type="InterPro" id="IPR017870">
    <property type="entry name" value="FeS_cluster_insertion_CS"/>
</dbReference>
<dbReference type="InterPro" id="IPR023063">
    <property type="entry name" value="FeS_cluster_insertion_RrpA"/>
</dbReference>
<dbReference type="InterPro" id="IPR035903">
    <property type="entry name" value="HesB-like_dom_sf"/>
</dbReference>
<dbReference type="NCBIfam" id="TIGR00049">
    <property type="entry name" value="iron-sulfur cluster assembly accessory protein"/>
    <property type="match status" value="1"/>
</dbReference>
<dbReference type="NCBIfam" id="NF010147">
    <property type="entry name" value="PRK13623.1"/>
    <property type="match status" value="1"/>
</dbReference>
<dbReference type="PANTHER" id="PTHR43011">
    <property type="entry name" value="IRON-SULFUR CLUSTER ASSEMBLY 2 HOMOLOG, MITOCHONDRIAL"/>
    <property type="match status" value="1"/>
</dbReference>
<dbReference type="PANTHER" id="PTHR43011:SF1">
    <property type="entry name" value="IRON-SULFUR CLUSTER ASSEMBLY 2 HOMOLOG, MITOCHONDRIAL"/>
    <property type="match status" value="1"/>
</dbReference>
<dbReference type="Pfam" id="PF01521">
    <property type="entry name" value="Fe-S_biosyn"/>
    <property type="match status" value="1"/>
</dbReference>
<dbReference type="SUPFAM" id="SSF89360">
    <property type="entry name" value="HesB-like domain"/>
    <property type="match status" value="1"/>
</dbReference>
<dbReference type="PROSITE" id="PS01152">
    <property type="entry name" value="HESB"/>
    <property type="match status" value="1"/>
</dbReference>
<keyword id="KW-0408">Iron</keyword>
<keyword id="KW-0411">Iron-sulfur</keyword>
<keyword id="KW-0479">Metal-binding</keyword>
<comment type="function">
    <text evidence="1">Required for insertion of 4Fe-4S clusters for at least IspG.</text>
</comment>
<comment type="cofactor">
    <cofactor evidence="1">
        <name>iron-sulfur cluster</name>
        <dbReference type="ChEBI" id="CHEBI:30408"/>
    </cofactor>
    <text evidence="1">Binds 1 iron-sulfur cluster per subunit.</text>
</comment>
<comment type="subunit">
    <text evidence="1">Homodimer.</text>
</comment>
<comment type="similarity">
    <text evidence="1">Belongs to the HesB/IscA family.</text>
</comment>
<name>ERPA_SALA4</name>
<organism>
    <name type="scientific">Salmonella agona (strain SL483)</name>
    <dbReference type="NCBI Taxonomy" id="454166"/>
    <lineage>
        <taxon>Bacteria</taxon>
        <taxon>Pseudomonadati</taxon>
        <taxon>Pseudomonadota</taxon>
        <taxon>Gammaproteobacteria</taxon>
        <taxon>Enterobacterales</taxon>
        <taxon>Enterobacteriaceae</taxon>
        <taxon>Salmonella</taxon>
    </lineage>
</organism>
<proteinExistence type="inferred from homology"/>
<sequence length="114" mass="12099">MSDDVALPLQFTDAAANKVKSLIADEDNPNLKLRVYITGGGCSGFQYGFTFDDQVNEGDMTIEKQGVGLVVDPMSLQYLVGGSVDYTEGLEGSRFIVTNPNAKSTCGCGSSFSI</sequence>